<accession>P46904</accession>
<evidence type="ECO:0000255" key="1"/>
<evidence type="ECO:0000269" key="2">
    <source>
    </source>
</evidence>
<evidence type="ECO:0000269" key="3">
    <source>
    </source>
</evidence>
<evidence type="ECO:0000303" key="4">
    <source>
    </source>
</evidence>
<evidence type="ECO:0000305" key="5"/>
<evidence type="ECO:0000312" key="6">
    <source>
        <dbReference type="EMBL" id="CAB12070.1"/>
    </source>
</evidence>
<keyword id="KW-1003">Cell membrane</keyword>
<keyword id="KW-0406">Ion transport</keyword>
<keyword id="KW-0472">Membrane</keyword>
<keyword id="KW-1185">Reference proteome</keyword>
<keyword id="KW-0915">Sodium</keyword>
<keyword id="KW-0739">Sodium transport</keyword>
<keyword id="KW-1278">Translocase</keyword>
<keyword id="KW-0812">Transmembrane</keyword>
<keyword id="KW-1133">Transmembrane helix</keyword>
<keyword id="KW-0813">Transport</keyword>
<proteinExistence type="evidence at protein level"/>
<protein>
    <recommendedName>
        <fullName evidence="5">ABC transporter permease protein NatB</fullName>
    </recommendedName>
    <alternativeName>
        <fullName>ABC-type Na(+) transporter</fullName>
        <ecNumber evidence="3">7.2.2.4</ecNumber>
    </alternativeName>
</protein>
<comment type="function">
    <text evidence="3">Part of an ABC transporter that catalyzes ATP-dependent electrogenic sodium extrusion.</text>
</comment>
<comment type="catalytic activity">
    <reaction evidence="3">
        <text>Na(+)(in) + ATP + H2O = Na(+)(out) + ADP + phosphate + H(+)</text>
        <dbReference type="Rhea" id="RHEA:14633"/>
        <dbReference type="ChEBI" id="CHEBI:15377"/>
        <dbReference type="ChEBI" id="CHEBI:15378"/>
        <dbReference type="ChEBI" id="CHEBI:29101"/>
        <dbReference type="ChEBI" id="CHEBI:30616"/>
        <dbReference type="ChEBI" id="CHEBI:43474"/>
        <dbReference type="ChEBI" id="CHEBI:456216"/>
        <dbReference type="EC" id="7.2.2.4"/>
    </reaction>
</comment>
<comment type="subunit">
    <text evidence="3">The complex is composed of NatA and NatB.</text>
</comment>
<comment type="subcellular location">
    <subcellularLocation>
        <location evidence="5">Cell membrane</location>
        <topology evidence="1">Multi-pass membrane protein</topology>
    </subcellularLocation>
</comment>
<comment type="induction">
    <text evidence="2 3">Induced by ethanol and the protonophore carbonylcyanide p-chlorophenylhydrazone (CCCP) and, more modestly, by sodium and potassium. Positively regulated by the two-component regulatory system NatK/NatR.</text>
</comment>
<reference key="1">
    <citation type="journal article" date="1997" name="Mol. Microbiol.">
        <title>A two-gene ABC-type transport system that extrudes Na+ in Bacillus subtilis is induced by ethanol or protonophore.</title>
        <authorList>
            <person name="Cheng J."/>
            <person name="Guffanti A.A."/>
            <person name="Krulwich T.A."/>
        </authorList>
    </citation>
    <scope>NUCLEOTIDE SEQUENCE [GENOMIC DNA]</scope>
    <scope>FUNCTION</scope>
    <scope>CATALYTIC ACTIVITY</scope>
    <scope>SUBUNIT</scope>
    <scope>INDUCTION</scope>
    <source>
        <strain>BD99</strain>
    </source>
</reference>
<reference key="2">
    <citation type="journal article" date="1997" name="Nature">
        <title>The complete genome sequence of the Gram-positive bacterium Bacillus subtilis.</title>
        <authorList>
            <person name="Kunst F."/>
            <person name="Ogasawara N."/>
            <person name="Moszer I."/>
            <person name="Albertini A.M."/>
            <person name="Alloni G."/>
            <person name="Azevedo V."/>
            <person name="Bertero M.G."/>
            <person name="Bessieres P."/>
            <person name="Bolotin A."/>
            <person name="Borchert S."/>
            <person name="Borriss R."/>
            <person name="Boursier L."/>
            <person name="Brans A."/>
            <person name="Braun M."/>
            <person name="Brignell S.C."/>
            <person name="Bron S."/>
            <person name="Brouillet S."/>
            <person name="Bruschi C.V."/>
            <person name="Caldwell B."/>
            <person name="Capuano V."/>
            <person name="Carter N.M."/>
            <person name="Choi S.-K."/>
            <person name="Codani J.-J."/>
            <person name="Connerton I.F."/>
            <person name="Cummings N.J."/>
            <person name="Daniel R.A."/>
            <person name="Denizot F."/>
            <person name="Devine K.M."/>
            <person name="Duesterhoeft A."/>
            <person name="Ehrlich S.D."/>
            <person name="Emmerson P.T."/>
            <person name="Entian K.-D."/>
            <person name="Errington J."/>
            <person name="Fabret C."/>
            <person name="Ferrari E."/>
            <person name="Foulger D."/>
            <person name="Fritz C."/>
            <person name="Fujita M."/>
            <person name="Fujita Y."/>
            <person name="Fuma S."/>
            <person name="Galizzi A."/>
            <person name="Galleron N."/>
            <person name="Ghim S.-Y."/>
            <person name="Glaser P."/>
            <person name="Goffeau A."/>
            <person name="Golightly E.J."/>
            <person name="Grandi G."/>
            <person name="Guiseppi G."/>
            <person name="Guy B.J."/>
            <person name="Haga K."/>
            <person name="Haiech J."/>
            <person name="Harwood C.R."/>
            <person name="Henaut A."/>
            <person name="Hilbert H."/>
            <person name="Holsappel S."/>
            <person name="Hosono S."/>
            <person name="Hullo M.-F."/>
            <person name="Itaya M."/>
            <person name="Jones L.-M."/>
            <person name="Joris B."/>
            <person name="Karamata D."/>
            <person name="Kasahara Y."/>
            <person name="Klaerr-Blanchard M."/>
            <person name="Klein C."/>
            <person name="Kobayashi Y."/>
            <person name="Koetter P."/>
            <person name="Koningstein G."/>
            <person name="Krogh S."/>
            <person name="Kumano M."/>
            <person name="Kurita K."/>
            <person name="Lapidus A."/>
            <person name="Lardinois S."/>
            <person name="Lauber J."/>
            <person name="Lazarevic V."/>
            <person name="Lee S.-M."/>
            <person name="Levine A."/>
            <person name="Liu H."/>
            <person name="Masuda S."/>
            <person name="Mauel C."/>
            <person name="Medigue C."/>
            <person name="Medina N."/>
            <person name="Mellado R.P."/>
            <person name="Mizuno M."/>
            <person name="Moestl D."/>
            <person name="Nakai S."/>
            <person name="Noback M."/>
            <person name="Noone D."/>
            <person name="O'Reilly M."/>
            <person name="Ogawa K."/>
            <person name="Ogiwara A."/>
            <person name="Oudega B."/>
            <person name="Park S.-H."/>
            <person name="Parro V."/>
            <person name="Pohl T.M."/>
            <person name="Portetelle D."/>
            <person name="Porwollik S."/>
            <person name="Prescott A.M."/>
            <person name="Presecan E."/>
            <person name="Pujic P."/>
            <person name="Purnelle B."/>
            <person name="Rapoport G."/>
            <person name="Rey M."/>
            <person name="Reynolds S."/>
            <person name="Rieger M."/>
            <person name="Rivolta C."/>
            <person name="Rocha E."/>
            <person name="Roche B."/>
            <person name="Rose M."/>
            <person name="Sadaie Y."/>
            <person name="Sato T."/>
            <person name="Scanlan E."/>
            <person name="Schleich S."/>
            <person name="Schroeter R."/>
            <person name="Scoffone F."/>
            <person name="Sekiguchi J."/>
            <person name="Sekowska A."/>
            <person name="Seror S.J."/>
            <person name="Serror P."/>
            <person name="Shin B.-S."/>
            <person name="Soldo B."/>
            <person name="Sorokin A."/>
            <person name="Tacconi E."/>
            <person name="Takagi T."/>
            <person name="Takahashi H."/>
            <person name="Takemaru K."/>
            <person name="Takeuchi M."/>
            <person name="Tamakoshi A."/>
            <person name="Tanaka T."/>
            <person name="Terpstra P."/>
            <person name="Tognoni A."/>
            <person name="Tosato V."/>
            <person name="Uchiyama S."/>
            <person name="Vandenbol M."/>
            <person name="Vannier F."/>
            <person name="Vassarotti A."/>
            <person name="Viari A."/>
            <person name="Wambutt R."/>
            <person name="Wedler E."/>
            <person name="Wedler H."/>
            <person name="Weitzenegger T."/>
            <person name="Winters P."/>
            <person name="Wipat A."/>
            <person name="Yamamoto H."/>
            <person name="Yamane K."/>
            <person name="Yasumoto K."/>
            <person name="Yata K."/>
            <person name="Yoshida K."/>
            <person name="Yoshikawa H.-F."/>
            <person name="Zumstein E."/>
            <person name="Yoshikawa H."/>
            <person name="Danchin A."/>
        </authorList>
    </citation>
    <scope>NUCLEOTIDE SEQUENCE [LARGE SCALE GENOMIC DNA]</scope>
    <source>
        <strain>168</strain>
    </source>
</reference>
<reference key="3">
    <citation type="journal article" date="2007" name="Microbiology">
        <title>The Bacillus subtilis NatK-NatR two-component system regulates expression of the natAB operon encoding an ABC transporter for sodium ion extrusion.</title>
        <authorList>
            <person name="Ogura M."/>
            <person name="Tsukahara K."/>
            <person name="Hayashi K."/>
            <person name="Tanaka T."/>
        </authorList>
    </citation>
    <scope>INDUCTION</scope>
    <source>
        <strain>168</strain>
    </source>
</reference>
<gene>
    <name evidence="4" type="primary">natB</name>
    <name evidence="6" type="ordered locus">BSU02760</name>
</gene>
<organism>
    <name type="scientific">Bacillus subtilis (strain 168)</name>
    <dbReference type="NCBI Taxonomy" id="224308"/>
    <lineage>
        <taxon>Bacteria</taxon>
        <taxon>Bacillati</taxon>
        <taxon>Bacillota</taxon>
        <taxon>Bacilli</taxon>
        <taxon>Bacillales</taxon>
        <taxon>Bacillaceae</taxon>
        <taxon>Bacillus</taxon>
    </lineage>
</organism>
<name>NATB_BACSU</name>
<feature type="chain" id="PRO_0000096741" description="ABC transporter permease protein NatB">
    <location>
        <begin position="1"/>
        <end position="386"/>
    </location>
</feature>
<feature type="transmembrane region" description="Helical" evidence="1">
    <location>
        <begin position="19"/>
        <end position="39"/>
    </location>
</feature>
<feature type="transmembrane region" description="Helical" evidence="1">
    <location>
        <begin position="172"/>
        <end position="192"/>
    </location>
</feature>
<feature type="transmembrane region" description="Helical" evidence="1">
    <location>
        <begin position="226"/>
        <end position="246"/>
    </location>
</feature>
<feature type="transmembrane region" description="Helical" evidence="1">
    <location>
        <begin position="273"/>
        <end position="293"/>
    </location>
</feature>
<feature type="transmembrane region" description="Helical" evidence="1">
    <location>
        <begin position="300"/>
        <end position="320"/>
    </location>
</feature>
<feature type="transmembrane region" description="Helical" evidence="1">
    <location>
        <begin position="353"/>
        <end position="373"/>
    </location>
</feature>
<sequence length="386" mass="42793">MLSHIYKKEMIDALRDRKTILLTILVPMIMMLGLVFFYESMLSDKGEQYTLAVGHSLPPALESKLNEIDEISVKTFAKPEEAVDEGKADAYLNVPKEFDSYVNSMTPFKVDVYGNSIDQGSSNAMQLVQSALDQYKNEIVQQRLTNKHIDQSVIQPFTIQQKEADEEKGTSAIMLSAILPMLILTSIVSGAMPIALDIMAGEKDRKSIEALLLTPVSRNKVLVGKWLAVSTFGVASGVFALVFLILSTVLFTENLKTAFQLGDHMWSVIGASALIIVLSALLISAMELFISIMSSSVKEAQSYMSLVVFLPVFPMFFIFSKAPNQFDLSYFLIPFLNLHALFKQLLFGMVDPATILSTSGTIAVLIAIFFLLARACFLKDKWVLPK</sequence>
<dbReference type="EC" id="7.2.2.4" evidence="3"/>
<dbReference type="EMBL" id="U30873">
    <property type="protein sequence ID" value="AAB53023.1"/>
    <property type="molecule type" value="Genomic_DNA"/>
</dbReference>
<dbReference type="EMBL" id="AL009126">
    <property type="protein sequence ID" value="CAB12070.1"/>
    <property type="molecule type" value="Genomic_DNA"/>
</dbReference>
<dbReference type="PIR" id="B69666">
    <property type="entry name" value="B69666"/>
</dbReference>
<dbReference type="RefSeq" id="NP_388158.1">
    <property type="nucleotide sequence ID" value="NC_000964.3"/>
</dbReference>
<dbReference type="RefSeq" id="WP_003246346.1">
    <property type="nucleotide sequence ID" value="NZ_OZ025638.1"/>
</dbReference>
<dbReference type="SMR" id="P46904"/>
<dbReference type="FunCoup" id="P46904">
    <property type="interactions" value="352"/>
</dbReference>
<dbReference type="IntAct" id="P46904">
    <property type="interactions" value="1"/>
</dbReference>
<dbReference type="STRING" id="224308.BSU02760"/>
<dbReference type="TCDB" id="3.A.1.115.1">
    <property type="family name" value="the atp-binding cassette (abc) superfamily"/>
</dbReference>
<dbReference type="PaxDb" id="224308-BSU02760"/>
<dbReference type="EnsemblBacteria" id="CAB12070">
    <property type="protein sequence ID" value="CAB12070"/>
    <property type="gene ID" value="BSU_02760"/>
</dbReference>
<dbReference type="GeneID" id="938383"/>
<dbReference type="KEGG" id="bsu:BSU02760"/>
<dbReference type="PATRIC" id="fig|224308.179.peg.286"/>
<dbReference type="eggNOG" id="COG1668">
    <property type="taxonomic scope" value="Bacteria"/>
</dbReference>
<dbReference type="InParanoid" id="P46904"/>
<dbReference type="OrthoDB" id="5486437at2"/>
<dbReference type="PhylomeDB" id="P46904"/>
<dbReference type="BioCyc" id="BSUB:BSU02760-MONOMER"/>
<dbReference type="BioCyc" id="MetaCyc:BSU02760-MONOMER"/>
<dbReference type="BRENDA" id="7.2.2.4">
    <property type="organism ID" value="658"/>
</dbReference>
<dbReference type="Proteomes" id="UP000001570">
    <property type="component" value="Chromosome"/>
</dbReference>
<dbReference type="GO" id="GO:0005886">
    <property type="term" value="C:plasma membrane"/>
    <property type="evidence" value="ECO:0007669"/>
    <property type="project" value="UniProtKB-SubCell"/>
</dbReference>
<dbReference type="GO" id="GO:0140679">
    <property type="term" value="F:ABC-type sodium transporter activity"/>
    <property type="evidence" value="ECO:0007669"/>
    <property type="project" value="UniProtKB-EC"/>
</dbReference>
<dbReference type="Gene3D" id="3.40.1710.10">
    <property type="entry name" value="abc type-2 transporter like domain"/>
    <property type="match status" value="1"/>
</dbReference>
<dbReference type="InterPro" id="IPR013525">
    <property type="entry name" value="ABC2_TM"/>
</dbReference>
<dbReference type="PANTHER" id="PTHR43471">
    <property type="entry name" value="ABC TRANSPORTER PERMEASE"/>
    <property type="match status" value="1"/>
</dbReference>
<dbReference type="PANTHER" id="PTHR43471:SF3">
    <property type="entry name" value="ABC TRANSPORTER PERMEASE PROTEIN NATB"/>
    <property type="match status" value="1"/>
</dbReference>
<dbReference type="Pfam" id="PF12698">
    <property type="entry name" value="ABC2_membrane_3"/>
    <property type="match status" value="1"/>
</dbReference>